<comment type="function">
    <text evidence="1">Catalyzes the attachment of proline to tRNA(Pro) in a two-step reaction: proline is first activated by ATP to form Pro-AMP and then transferred to the acceptor end of tRNA(Pro). As ProRS can inadvertently accommodate and process non-cognate amino acids such as alanine and cysteine, to avoid such errors it has two additional distinct editing activities against alanine. One activity is designated as 'pretransfer' editing and involves the tRNA(Pro)-independent hydrolysis of activated Ala-AMP. The other activity is designated 'posttransfer' editing and involves deacylation of mischarged Ala-tRNA(Pro). The misacylated Cys-tRNA(Pro) is not edited by ProRS.</text>
</comment>
<comment type="catalytic activity">
    <reaction evidence="1">
        <text>tRNA(Pro) + L-proline + ATP = L-prolyl-tRNA(Pro) + AMP + diphosphate</text>
        <dbReference type="Rhea" id="RHEA:14305"/>
        <dbReference type="Rhea" id="RHEA-COMP:9700"/>
        <dbReference type="Rhea" id="RHEA-COMP:9702"/>
        <dbReference type="ChEBI" id="CHEBI:30616"/>
        <dbReference type="ChEBI" id="CHEBI:33019"/>
        <dbReference type="ChEBI" id="CHEBI:60039"/>
        <dbReference type="ChEBI" id="CHEBI:78442"/>
        <dbReference type="ChEBI" id="CHEBI:78532"/>
        <dbReference type="ChEBI" id="CHEBI:456215"/>
        <dbReference type="EC" id="6.1.1.15"/>
    </reaction>
</comment>
<comment type="subunit">
    <text evidence="1">Homodimer.</text>
</comment>
<comment type="subcellular location">
    <subcellularLocation>
        <location evidence="1">Cytoplasm</location>
    </subcellularLocation>
</comment>
<comment type="domain">
    <text evidence="1">Consists of three domains: the N-terminal catalytic domain, the editing domain and the C-terminal anticodon-binding domain.</text>
</comment>
<comment type="similarity">
    <text evidence="1">Belongs to the class-II aminoacyl-tRNA synthetase family. ProS type 1 subfamily.</text>
</comment>
<dbReference type="EC" id="6.1.1.15" evidence="1"/>
<dbReference type="EMBL" id="CP000969">
    <property type="protein sequence ID" value="ACB08779.1"/>
    <property type="molecule type" value="Genomic_DNA"/>
</dbReference>
<dbReference type="RefSeq" id="WP_012310538.1">
    <property type="nucleotide sequence ID" value="NC_010483.1"/>
</dbReference>
<dbReference type="SMR" id="B1L8Y1"/>
<dbReference type="KEGG" id="trq:TRQ2_0423"/>
<dbReference type="HOGENOM" id="CLU_016739_0_0_0"/>
<dbReference type="Proteomes" id="UP000001687">
    <property type="component" value="Chromosome"/>
</dbReference>
<dbReference type="GO" id="GO:0005829">
    <property type="term" value="C:cytosol"/>
    <property type="evidence" value="ECO:0007669"/>
    <property type="project" value="TreeGrafter"/>
</dbReference>
<dbReference type="GO" id="GO:0002161">
    <property type="term" value="F:aminoacyl-tRNA deacylase activity"/>
    <property type="evidence" value="ECO:0007669"/>
    <property type="project" value="InterPro"/>
</dbReference>
<dbReference type="GO" id="GO:0005524">
    <property type="term" value="F:ATP binding"/>
    <property type="evidence" value="ECO:0007669"/>
    <property type="project" value="UniProtKB-UniRule"/>
</dbReference>
<dbReference type="GO" id="GO:0004827">
    <property type="term" value="F:proline-tRNA ligase activity"/>
    <property type="evidence" value="ECO:0007669"/>
    <property type="project" value="UniProtKB-UniRule"/>
</dbReference>
<dbReference type="GO" id="GO:0006433">
    <property type="term" value="P:prolyl-tRNA aminoacylation"/>
    <property type="evidence" value="ECO:0007669"/>
    <property type="project" value="UniProtKB-UniRule"/>
</dbReference>
<dbReference type="CDD" id="cd04334">
    <property type="entry name" value="ProRS-INS"/>
    <property type="match status" value="1"/>
</dbReference>
<dbReference type="CDD" id="cd00861">
    <property type="entry name" value="ProRS_anticodon_short"/>
    <property type="match status" value="1"/>
</dbReference>
<dbReference type="CDD" id="cd00779">
    <property type="entry name" value="ProRS_core_prok"/>
    <property type="match status" value="1"/>
</dbReference>
<dbReference type="FunFam" id="3.30.930.10:FF:000088">
    <property type="entry name" value="Proline--tRNA ligase"/>
    <property type="match status" value="1"/>
</dbReference>
<dbReference type="FunFam" id="3.30.930.10:FF:000167">
    <property type="entry name" value="Proline--tRNA ligase"/>
    <property type="match status" value="1"/>
</dbReference>
<dbReference type="Gene3D" id="3.40.50.800">
    <property type="entry name" value="Anticodon-binding domain"/>
    <property type="match status" value="1"/>
</dbReference>
<dbReference type="Gene3D" id="3.30.930.10">
    <property type="entry name" value="Bira Bifunctional Protein, Domain 2"/>
    <property type="match status" value="2"/>
</dbReference>
<dbReference type="HAMAP" id="MF_01569">
    <property type="entry name" value="Pro_tRNA_synth_type1"/>
    <property type="match status" value="1"/>
</dbReference>
<dbReference type="InterPro" id="IPR002314">
    <property type="entry name" value="aa-tRNA-synt_IIb"/>
</dbReference>
<dbReference type="InterPro" id="IPR006195">
    <property type="entry name" value="aa-tRNA-synth_II"/>
</dbReference>
<dbReference type="InterPro" id="IPR045864">
    <property type="entry name" value="aa-tRNA-synth_II/BPL/LPL"/>
</dbReference>
<dbReference type="InterPro" id="IPR004154">
    <property type="entry name" value="Anticodon-bd"/>
</dbReference>
<dbReference type="InterPro" id="IPR036621">
    <property type="entry name" value="Anticodon-bd_dom_sf"/>
</dbReference>
<dbReference type="InterPro" id="IPR002316">
    <property type="entry name" value="Pro-tRNA-ligase_IIa"/>
</dbReference>
<dbReference type="InterPro" id="IPR004500">
    <property type="entry name" value="Pro-tRNA-synth_IIa_bac-type"/>
</dbReference>
<dbReference type="InterPro" id="IPR023717">
    <property type="entry name" value="Pro-tRNA-Synthase_IIa_type1"/>
</dbReference>
<dbReference type="InterPro" id="IPR050062">
    <property type="entry name" value="Pro-tRNA_synthetase"/>
</dbReference>
<dbReference type="InterPro" id="IPR044140">
    <property type="entry name" value="ProRS_anticodon_short"/>
</dbReference>
<dbReference type="InterPro" id="IPR033730">
    <property type="entry name" value="ProRS_core_prok"/>
</dbReference>
<dbReference type="InterPro" id="IPR036754">
    <property type="entry name" value="YbaK/aa-tRNA-synt-asso_dom_sf"/>
</dbReference>
<dbReference type="InterPro" id="IPR007214">
    <property type="entry name" value="YbaK/aa-tRNA-synth-assoc-dom"/>
</dbReference>
<dbReference type="NCBIfam" id="NF006625">
    <property type="entry name" value="PRK09194.1"/>
    <property type="match status" value="1"/>
</dbReference>
<dbReference type="NCBIfam" id="TIGR00409">
    <property type="entry name" value="proS_fam_II"/>
    <property type="match status" value="1"/>
</dbReference>
<dbReference type="PANTHER" id="PTHR42753">
    <property type="entry name" value="MITOCHONDRIAL RIBOSOME PROTEIN L39/PROLYL-TRNA LIGASE FAMILY MEMBER"/>
    <property type="match status" value="1"/>
</dbReference>
<dbReference type="PANTHER" id="PTHR42753:SF2">
    <property type="entry name" value="PROLINE--TRNA LIGASE"/>
    <property type="match status" value="1"/>
</dbReference>
<dbReference type="Pfam" id="PF03129">
    <property type="entry name" value="HGTP_anticodon"/>
    <property type="match status" value="1"/>
</dbReference>
<dbReference type="Pfam" id="PF00587">
    <property type="entry name" value="tRNA-synt_2b"/>
    <property type="match status" value="1"/>
</dbReference>
<dbReference type="Pfam" id="PF04073">
    <property type="entry name" value="tRNA_edit"/>
    <property type="match status" value="1"/>
</dbReference>
<dbReference type="PRINTS" id="PR01046">
    <property type="entry name" value="TRNASYNTHPRO"/>
</dbReference>
<dbReference type="SUPFAM" id="SSF52954">
    <property type="entry name" value="Class II aaRS ABD-related"/>
    <property type="match status" value="1"/>
</dbReference>
<dbReference type="SUPFAM" id="SSF55681">
    <property type="entry name" value="Class II aaRS and biotin synthetases"/>
    <property type="match status" value="1"/>
</dbReference>
<dbReference type="SUPFAM" id="SSF55826">
    <property type="entry name" value="YbaK/ProRS associated domain"/>
    <property type="match status" value="1"/>
</dbReference>
<dbReference type="PROSITE" id="PS50862">
    <property type="entry name" value="AA_TRNA_LIGASE_II"/>
    <property type="match status" value="1"/>
</dbReference>
<sequence length="577" mass="65975">MRMKDLYAPTLKETPSDVETVSHEYLLRGGFIRKTAAGIYTYLPLGRRVLLKIENIVREEMNRIGAQEILMPILQPAELWKQSGRWDDYGPEMMKLKDRHERDFTLGPTHEEIVTDLVKNELRSYRQLPLVVYQVANKYRDEIRPRFGLLRAREFIMKDAYSFHSSWESLDETYELFKEAYSRIMERLGVKYMVIEAETGAIGGNASHEFVVPAKIGETNVLFCEKCGYQASDEKAEYKGEYTQEQEEEKPFKKVPTPGVKTIEEVSEFLGVPPSKIVKSLLYKGREGYVMVLIRGDLELNEAKLKAHLKDQSLRMATPEEILKDFGVPVGFIGPIGVDVKKVADHSVRGLKNFVVGGMEEDTHYVNANHPRDFKVDEWYDLRTMVEGDPCPVCGEPLKATKGIELGHIFKLGTKYSEAMKAYFMDENGEMKPFIMGCYGWGVSRTMAAVVEHFHDENGMIWPLSIAPYTVVVDILNMNDAEQKQVGEKIYQVLSEKGEEVVLDDREVSPGFKFKDADLIGFPIRINVGRSLKEGVVELKKRYSKELVKVNIKNGFGTLLETLEKMKREYDPKEAAR</sequence>
<name>SYP_THESQ</name>
<reference key="1">
    <citation type="journal article" date="2011" name="J. Bacteriol.">
        <title>Genome sequence of Thermotoga sp. strain RQ2, a hyperthermophilic bacterium isolated from a geothermally heated region of the seafloor near Ribeira Quente, the Azores.</title>
        <authorList>
            <person name="Swithers K.S."/>
            <person name="DiPippo J.L."/>
            <person name="Bruce D.C."/>
            <person name="Detter C."/>
            <person name="Tapia R."/>
            <person name="Han S."/>
            <person name="Saunders E."/>
            <person name="Goodwin L.A."/>
            <person name="Han J."/>
            <person name="Woyke T."/>
            <person name="Pitluck S."/>
            <person name="Pennacchio L."/>
            <person name="Nolan M."/>
            <person name="Mikhailova N."/>
            <person name="Lykidis A."/>
            <person name="Land M.L."/>
            <person name="Brettin T."/>
            <person name="Stetter K.O."/>
            <person name="Nelson K.E."/>
            <person name="Gogarten J.P."/>
            <person name="Noll K.M."/>
        </authorList>
    </citation>
    <scope>NUCLEOTIDE SEQUENCE [LARGE SCALE GENOMIC DNA]</scope>
    <source>
        <strain>RQ2</strain>
    </source>
</reference>
<keyword id="KW-0030">Aminoacyl-tRNA synthetase</keyword>
<keyword id="KW-0067">ATP-binding</keyword>
<keyword id="KW-0963">Cytoplasm</keyword>
<keyword id="KW-0436">Ligase</keyword>
<keyword id="KW-0547">Nucleotide-binding</keyword>
<keyword id="KW-0648">Protein biosynthesis</keyword>
<proteinExistence type="inferred from homology"/>
<organism>
    <name type="scientific">Thermotoga sp. (strain RQ2)</name>
    <dbReference type="NCBI Taxonomy" id="126740"/>
    <lineage>
        <taxon>Bacteria</taxon>
        <taxon>Thermotogati</taxon>
        <taxon>Thermotogota</taxon>
        <taxon>Thermotogae</taxon>
        <taxon>Thermotogales</taxon>
        <taxon>Thermotogaceae</taxon>
        <taxon>Thermotoga</taxon>
    </lineage>
</organism>
<feature type="chain" id="PRO_1000199437" description="Proline--tRNA ligase">
    <location>
        <begin position="1"/>
        <end position="577"/>
    </location>
</feature>
<evidence type="ECO:0000255" key="1">
    <source>
        <dbReference type="HAMAP-Rule" id="MF_01569"/>
    </source>
</evidence>
<accession>B1L8Y1</accession>
<gene>
    <name evidence="1" type="primary">proS</name>
    <name type="ordered locus">TRQ2_0423</name>
</gene>
<protein>
    <recommendedName>
        <fullName evidence="1">Proline--tRNA ligase</fullName>
        <ecNumber evidence="1">6.1.1.15</ecNumber>
    </recommendedName>
    <alternativeName>
        <fullName evidence="1">Prolyl-tRNA synthetase</fullName>
        <shortName evidence="1">ProRS</shortName>
    </alternativeName>
</protein>